<sequence>MGKVVGIDLGTTNSVIAVMEGGKPTVIPNAEGFRTTASVVAYTKSGDKLVGQIARRQAVINPENTFYSVKRFIGRKQNEISQEIRQTSYNVKTSGSSIKIACPALNKDFAPEEISAQVLRKLVEDASTYLGETVTQAVITVPAYFNDSQRQATKDAGKIAGLDVLRIINEPTAASLSYGLDKQNNETILVFDLGGGTFDVSVLEVGDGVFEVLSTSGDTHLGGDDFDQQIVEWLIKDFKQNEGIDLGKDRQALQRLTEAAEKAKIELSNLTQTEINLPFITATQDGPKHLEKTVTRGKFEELCSNLIDKCSIPVNNALKDAKLEASSIDEVVLVGGSTRIPAIQQMVKRLIGKDPNQSVNPDEVVAIGAAVQAGVLAGEVKDILLLDVTPLSLGVETLGGVMTKIIPRNTTIPTKKSEVFSTAVDNPPNVEIQVLQGERELTKDNKSLGTFRLDGIMPAPRGVPQIEVTFDIDANGILSVKAKEKATGKEQSITISGASTLPKDDVERMVKEAEENFDTDQKRRKNIDTKNQAESLCYQAEKQVKEFEDKISQDLKIKIEELITELRSSLEKEEYDNIESISQQLQNALMDIGKNAAQTESKDTKAKDDDTVIDTDFSEAK</sequence>
<feature type="chain" id="PRO_0000275350" description="Chaperone protein dnaK">
    <location>
        <begin position="1"/>
        <end position="621"/>
    </location>
</feature>
<feature type="region of interest" description="Disordered" evidence="2">
    <location>
        <begin position="596"/>
        <end position="621"/>
    </location>
</feature>
<feature type="compositionally biased region" description="Basic and acidic residues" evidence="2">
    <location>
        <begin position="600"/>
        <end position="610"/>
    </location>
</feature>
<feature type="compositionally biased region" description="Acidic residues" evidence="2">
    <location>
        <begin position="611"/>
        <end position="621"/>
    </location>
</feature>
<feature type="sequence conflict" description="In Ref. 1; ABF54971." evidence="3" ref="1">
    <original>P</original>
    <variation>Q</variation>
    <location>
        <position position="427"/>
    </location>
</feature>
<organism>
    <name type="scientific">Pyropia yezoensis</name>
    <name type="common">Susabi-nori</name>
    <name type="synonym">Porphyra yezoensis</name>
    <dbReference type="NCBI Taxonomy" id="2788"/>
    <lineage>
        <taxon>Eukaryota</taxon>
        <taxon>Rhodophyta</taxon>
        <taxon>Bangiophyceae</taxon>
        <taxon>Bangiales</taxon>
        <taxon>Bangiaceae</taxon>
        <taxon>Pyropia</taxon>
    </lineage>
</organism>
<evidence type="ECO:0000255" key="1">
    <source>
        <dbReference type="HAMAP-Rule" id="MF_00332"/>
    </source>
</evidence>
<evidence type="ECO:0000256" key="2">
    <source>
        <dbReference type="SAM" id="MobiDB-lite"/>
    </source>
</evidence>
<evidence type="ECO:0000305" key="3"/>
<protein>
    <recommendedName>
        <fullName>Chaperone protein dnaK</fullName>
    </recommendedName>
    <alternativeName>
        <fullName evidence="1">HSP70</fullName>
    </alternativeName>
    <alternativeName>
        <fullName evidence="1">Heat shock 70 kDa protein</fullName>
    </alternativeName>
    <alternativeName>
        <fullName evidence="1">Heat shock protein 70</fullName>
    </alternativeName>
</protein>
<comment type="function">
    <text evidence="1">Acts as a chaperone.</text>
</comment>
<comment type="subcellular location">
    <subcellularLocation>
        <location>Plastid</location>
        <location>Chloroplast</location>
    </subcellularLocation>
</comment>
<comment type="similarity">
    <text evidence="1">Belongs to the heat shock protein 70 family.</text>
</comment>
<gene>
    <name evidence="1" type="primary">dnaK</name>
</gene>
<reference key="1">
    <citation type="submission" date="2006-04" db="EMBL/GenBank/DDBJ databases">
        <title>Cloning hsp70 from Porphyra haitanesis and Porphyra yezoensis.</title>
        <authorList>
            <person name="Xu N.L."/>
            <person name="Yang R."/>
        </authorList>
    </citation>
    <scope>NUCLEOTIDE SEQUENCE [GENOMIC DNA]</scope>
</reference>
<reference key="2">
    <citation type="submission" date="2003-11" db="EMBL/GenBank/DDBJ databases">
        <title>Whole genome sequence of Porphyra yezoensis chloroplast.</title>
        <authorList>
            <person name="Kunimoto M."/>
            <person name="Morishima K."/>
            <person name="Yoshikawa M."/>
            <person name="Fukuda S."/>
            <person name="Kobayashi T."/>
            <person name="Kobayashi M."/>
            <person name="Okazaki T."/>
            <person name="Ohara I."/>
            <person name="Nakayama I."/>
        </authorList>
    </citation>
    <scope>NUCLEOTIDE SEQUENCE [LARGE SCALE GENOMIC DNA]</scope>
    <source>
        <strain>U-51</strain>
    </source>
</reference>
<accession>Q1XDH2</accession>
<accession>Q1HDW3</accession>
<dbReference type="EMBL" id="DQ497595">
    <property type="protein sequence ID" value="ABF54971.1"/>
    <property type="molecule type" value="Genomic_DNA"/>
</dbReference>
<dbReference type="EMBL" id="AP006715">
    <property type="protein sequence ID" value="BAE92439.1"/>
    <property type="molecule type" value="Genomic_DNA"/>
</dbReference>
<dbReference type="RefSeq" id="YP_536996.1">
    <property type="nucleotide sequence ID" value="NC_007932.1"/>
</dbReference>
<dbReference type="SMR" id="Q1XDH2"/>
<dbReference type="GeneID" id="3978883"/>
<dbReference type="GO" id="GO:0009507">
    <property type="term" value="C:chloroplast"/>
    <property type="evidence" value="ECO:0007669"/>
    <property type="project" value="UniProtKB-SubCell"/>
</dbReference>
<dbReference type="GO" id="GO:0005524">
    <property type="term" value="F:ATP binding"/>
    <property type="evidence" value="ECO:0007669"/>
    <property type="project" value="UniProtKB-UniRule"/>
</dbReference>
<dbReference type="GO" id="GO:0140662">
    <property type="term" value="F:ATP-dependent protein folding chaperone"/>
    <property type="evidence" value="ECO:0007669"/>
    <property type="project" value="InterPro"/>
</dbReference>
<dbReference type="GO" id="GO:0051082">
    <property type="term" value="F:unfolded protein binding"/>
    <property type="evidence" value="ECO:0007669"/>
    <property type="project" value="InterPro"/>
</dbReference>
<dbReference type="CDD" id="cd10234">
    <property type="entry name" value="ASKHA_NBD_HSP70_DnaK-like"/>
    <property type="match status" value="1"/>
</dbReference>
<dbReference type="FunFam" id="2.60.34.10:FF:000014">
    <property type="entry name" value="Chaperone protein DnaK HSP70"/>
    <property type="match status" value="1"/>
</dbReference>
<dbReference type="FunFam" id="1.20.1270.10:FF:000001">
    <property type="entry name" value="Molecular chaperone DnaK"/>
    <property type="match status" value="1"/>
</dbReference>
<dbReference type="FunFam" id="3.30.420.40:FF:000004">
    <property type="entry name" value="Molecular chaperone DnaK"/>
    <property type="match status" value="1"/>
</dbReference>
<dbReference type="FunFam" id="3.90.640.10:FF:000003">
    <property type="entry name" value="Molecular chaperone DnaK"/>
    <property type="match status" value="1"/>
</dbReference>
<dbReference type="Gene3D" id="1.20.1270.10">
    <property type="match status" value="1"/>
</dbReference>
<dbReference type="Gene3D" id="3.30.420.40">
    <property type="match status" value="2"/>
</dbReference>
<dbReference type="Gene3D" id="3.90.640.10">
    <property type="entry name" value="Actin, Chain A, domain 4"/>
    <property type="match status" value="1"/>
</dbReference>
<dbReference type="Gene3D" id="2.60.34.10">
    <property type="entry name" value="Substrate Binding Domain Of DNAk, Chain A, domain 1"/>
    <property type="match status" value="1"/>
</dbReference>
<dbReference type="HAMAP" id="MF_00332">
    <property type="entry name" value="DnaK"/>
    <property type="match status" value="1"/>
</dbReference>
<dbReference type="InterPro" id="IPR043129">
    <property type="entry name" value="ATPase_NBD"/>
</dbReference>
<dbReference type="InterPro" id="IPR012725">
    <property type="entry name" value="Chaperone_DnaK"/>
</dbReference>
<dbReference type="InterPro" id="IPR018181">
    <property type="entry name" value="Heat_shock_70_CS"/>
</dbReference>
<dbReference type="InterPro" id="IPR029048">
    <property type="entry name" value="HSP70_C_sf"/>
</dbReference>
<dbReference type="InterPro" id="IPR029047">
    <property type="entry name" value="HSP70_peptide-bd_sf"/>
</dbReference>
<dbReference type="InterPro" id="IPR013126">
    <property type="entry name" value="Hsp_70_fam"/>
</dbReference>
<dbReference type="NCBIfam" id="NF001413">
    <property type="entry name" value="PRK00290.1"/>
    <property type="match status" value="1"/>
</dbReference>
<dbReference type="NCBIfam" id="NF003520">
    <property type="entry name" value="PRK05183.1"/>
    <property type="match status" value="1"/>
</dbReference>
<dbReference type="NCBIfam" id="TIGR02350">
    <property type="entry name" value="prok_dnaK"/>
    <property type="match status" value="1"/>
</dbReference>
<dbReference type="PANTHER" id="PTHR19375">
    <property type="entry name" value="HEAT SHOCK PROTEIN 70KDA"/>
    <property type="match status" value="1"/>
</dbReference>
<dbReference type="Pfam" id="PF00012">
    <property type="entry name" value="HSP70"/>
    <property type="match status" value="1"/>
</dbReference>
<dbReference type="PRINTS" id="PR00301">
    <property type="entry name" value="HEATSHOCK70"/>
</dbReference>
<dbReference type="SUPFAM" id="SSF53067">
    <property type="entry name" value="Actin-like ATPase domain"/>
    <property type="match status" value="2"/>
</dbReference>
<dbReference type="SUPFAM" id="SSF100920">
    <property type="entry name" value="Heat shock protein 70kD (HSP70), peptide-binding domain"/>
    <property type="match status" value="1"/>
</dbReference>
<dbReference type="PROSITE" id="PS00297">
    <property type="entry name" value="HSP70_1"/>
    <property type="match status" value="1"/>
</dbReference>
<dbReference type="PROSITE" id="PS00329">
    <property type="entry name" value="HSP70_2"/>
    <property type="match status" value="1"/>
</dbReference>
<dbReference type="PROSITE" id="PS01036">
    <property type="entry name" value="HSP70_3"/>
    <property type="match status" value="1"/>
</dbReference>
<proteinExistence type="inferred from homology"/>
<keyword id="KW-0067">ATP-binding</keyword>
<keyword id="KW-0143">Chaperone</keyword>
<keyword id="KW-0150">Chloroplast</keyword>
<keyword id="KW-0547">Nucleotide-binding</keyword>
<keyword id="KW-0934">Plastid</keyword>
<geneLocation type="chloroplast"/>
<name>DNAK_PYRYE</name>